<protein>
    <recommendedName>
        <fullName>Thrombospondin-4</fullName>
    </recommendedName>
</protein>
<feature type="signal peptide" evidence="2">
    <location>
        <begin position="1"/>
        <end position="26"/>
    </location>
</feature>
<feature type="chain" id="PRO_0000035853" description="Thrombospondin-4">
    <location>
        <begin position="27"/>
        <end position="963"/>
    </location>
</feature>
<feature type="domain" description="Laminin G-like">
    <location>
        <begin position="29"/>
        <end position="194"/>
    </location>
</feature>
<feature type="domain" description="EGF-like 1" evidence="3">
    <location>
        <begin position="288"/>
        <end position="327"/>
    </location>
</feature>
<feature type="domain" description="EGF-like 2; calcium-binding" evidence="3">
    <location>
        <begin position="328"/>
        <end position="365"/>
    </location>
</feature>
<feature type="domain" description="EGF-like 3; calcium-binding" evidence="3">
    <location>
        <begin position="381"/>
        <end position="418"/>
    </location>
</feature>
<feature type="domain" description="EGF-like 4" evidence="3">
    <location>
        <begin position="422"/>
        <end position="464"/>
    </location>
</feature>
<feature type="repeat" description="TSP type-3 1">
    <location>
        <begin position="465"/>
        <end position="497"/>
    </location>
</feature>
<feature type="repeat" description="TSP type-3 2">
    <location>
        <begin position="498"/>
        <end position="533"/>
    </location>
</feature>
<feature type="repeat" description="TSP type-3 3">
    <location>
        <begin position="534"/>
        <end position="556"/>
    </location>
</feature>
<feature type="repeat" description="TSP type-3 4">
    <location>
        <begin position="557"/>
        <end position="592"/>
    </location>
</feature>
<feature type="repeat" description="TSP type-3 5">
    <location>
        <begin position="593"/>
        <end position="615"/>
    </location>
</feature>
<feature type="repeat" description="TSP type-3 6">
    <location>
        <begin position="616"/>
        <end position="653"/>
    </location>
</feature>
<feature type="repeat" description="TSP type-3 7">
    <location>
        <begin position="654"/>
        <end position="693"/>
    </location>
</feature>
<feature type="repeat" description="TSP type-3 8">
    <location>
        <begin position="694"/>
        <end position="729"/>
    </location>
</feature>
<feature type="domain" description="TSP C-terminal" evidence="4">
    <location>
        <begin position="733"/>
        <end position="947"/>
    </location>
</feature>
<feature type="region of interest" description="Disordered" evidence="5">
    <location>
        <begin position="579"/>
        <end position="676"/>
    </location>
</feature>
<feature type="short sequence motif" description="Cell attachment site" evidence="2">
    <location>
        <begin position="138"/>
        <end position="140"/>
    </location>
</feature>
<feature type="short sequence motif" description="Cell attachment site" evidence="2">
    <location>
        <begin position="564"/>
        <end position="566"/>
    </location>
</feature>
<feature type="compositionally biased region" description="Polar residues" evidence="5">
    <location>
        <begin position="642"/>
        <end position="654"/>
    </location>
</feature>
<feature type="compositionally biased region" description="Acidic residues" evidence="5">
    <location>
        <begin position="662"/>
        <end position="673"/>
    </location>
</feature>
<feature type="glycosylation site" description="N-linked (GlcNAc...) asparagine" evidence="2">
    <location>
        <position position="614"/>
    </location>
</feature>
<feature type="glycosylation site" description="N-linked (GlcNAc...) asparagine" evidence="2">
    <location>
        <position position="650"/>
    </location>
</feature>
<feature type="glycosylation site" description="N-linked (GlcNAc...) asparagine" evidence="2">
    <location>
        <position position="943"/>
    </location>
</feature>
<feature type="disulfide bond" description="Interchain" evidence="3">
    <location>
        <position position="260"/>
    </location>
</feature>
<feature type="disulfide bond" description="Interchain" evidence="3">
    <location>
        <position position="263"/>
    </location>
</feature>
<feature type="disulfide bond" evidence="3">
    <location>
        <begin position="292"/>
        <end position="303"/>
    </location>
</feature>
<feature type="disulfide bond" evidence="3">
    <location>
        <begin position="297"/>
        <end position="312"/>
    </location>
</feature>
<feature type="disulfide bond" evidence="3">
    <location>
        <begin position="315"/>
        <end position="326"/>
    </location>
</feature>
<feature type="disulfide bond" evidence="3">
    <location>
        <begin position="332"/>
        <end position="343"/>
    </location>
</feature>
<feature type="disulfide bond" evidence="3">
    <location>
        <begin position="337"/>
        <end position="352"/>
    </location>
</feature>
<feature type="disulfide bond" evidence="3">
    <location>
        <begin position="355"/>
        <end position="379"/>
    </location>
</feature>
<feature type="disulfide bond" evidence="3">
    <location>
        <begin position="385"/>
        <end position="396"/>
    </location>
</feature>
<feature type="disulfide bond" evidence="3">
    <location>
        <begin position="390"/>
        <end position="405"/>
    </location>
</feature>
<feature type="disulfide bond" evidence="3">
    <location>
        <begin position="408"/>
        <end position="420"/>
    </location>
</feature>
<feature type="disulfide bond" evidence="3">
    <location>
        <begin position="426"/>
        <end position="440"/>
    </location>
</feature>
<feature type="disulfide bond" evidence="3">
    <location>
        <begin position="434"/>
        <end position="450"/>
    </location>
</feature>
<feature type="disulfide bond" evidence="3">
    <location>
        <begin position="452"/>
        <end position="463"/>
    </location>
</feature>
<feature type="disulfide bond" evidence="3">
    <location>
        <begin position="479"/>
        <end position="484"/>
    </location>
</feature>
<feature type="disulfide bond" evidence="3">
    <location>
        <begin position="489"/>
        <end position="509"/>
    </location>
</feature>
<feature type="disulfide bond" evidence="3">
    <location>
        <begin position="525"/>
        <end position="545"/>
    </location>
</feature>
<feature type="disulfide bond" evidence="3">
    <location>
        <begin position="548"/>
        <end position="568"/>
    </location>
</feature>
<feature type="disulfide bond" evidence="3">
    <location>
        <begin position="584"/>
        <end position="604"/>
    </location>
</feature>
<feature type="disulfide bond" evidence="3">
    <location>
        <begin position="607"/>
        <end position="627"/>
    </location>
</feature>
<feature type="disulfide bond" evidence="3">
    <location>
        <begin position="645"/>
        <end position="665"/>
    </location>
</feature>
<feature type="disulfide bond" evidence="3">
    <location>
        <begin position="685"/>
        <end position="705"/>
    </location>
</feature>
<feature type="disulfide bond" evidence="3">
    <location>
        <begin position="721"/>
        <end position="942"/>
    </location>
</feature>
<feature type="sequence conflict" description="In Ref. 1; AAD27642." evidence="12" ref="1">
    <original>S</original>
    <variation>P</variation>
    <location>
        <position position="40"/>
    </location>
</feature>
<feature type="sequence conflict" description="In Ref. 1; AAD32714." evidence="12" ref="1">
    <original>R</original>
    <variation>H</variation>
    <location>
        <position position="290"/>
    </location>
</feature>
<organism>
    <name type="scientific">Mus musculus</name>
    <name type="common">Mouse</name>
    <dbReference type="NCBI Taxonomy" id="10090"/>
    <lineage>
        <taxon>Eukaryota</taxon>
        <taxon>Metazoa</taxon>
        <taxon>Chordata</taxon>
        <taxon>Craniata</taxon>
        <taxon>Vertebrata</taxon>
        <taxon>Euteleostomi</taxon>
        <taxon>Mammalia</taxon>
        <taxon>Eutheria</taxon>
        <taxon>Euarchontoglires</taxon>
        <taxon>Glires</taxon>
        <taxon>Rodentia</taxon>
        <taxon>Myomorpha</taxon>
        <taxon>Muroidea</taxon>
        <taxon>Muridae</taxon>
        <taxon>Murinae</taxon>
        <taxon>Mus</taxon>
        <taxon>Mus</taxon>
    </lineage>
</organism>
<keyword id="KW-0106">Calcium</keyword>
<keyword id="KW-0130">Cell adhesion</keyword>
<keyword id="KW-1015">Disulfide bond</keyword>
<keyword id="KW-0245">EGF-like domain</keyword>
<keyword id="KW-0256">Endoplasmic reticulum</keyword>
<keyword id="KW-0272">Extracellular matrix</keyword>
<keyword id="KW-0325">Glycoprotein</keyword>
<keyword id="KW-0339">Growth factor</keyword>
<keyword id="KW-0497">Mitogen</keyword>
<keyword id="KW-1185">Reference proteome</keyword>
<keyword id="KW-0677">Repeat</keyword>
<keyword id="KW-0703">Sarcoplasmic reticulum</keyword>
<keyword id="KW-0964">Secreted</keyword>
<keyword id="KW-0732">Signal</keyword>
<keyword id="KW-0797">Tissue remodeling</keyword>
<keyword id="KW-0834">Unfolded protein response</keyword>
<dbReference type="EMBL" id="AF102887">
    <property type="protein sequence ID" value="AAC73003.1"/>
    <property type="molecule type" value="mRNA"/>
</dbReference>
<dbReference type="EMBL" id="AF130461">
    <property type="protein sequence ID" value="AAD27642.1"/>
    <property type="molecule type" value="Genomic_DNA"/>
</dbReference>
<dbReference type="EMBL" id="AH007739">
    <property type="protein sequence ID" value="AAD32714.1"/>
    <property type="molecule type" value="Genomic_DNA"/>
</dbReference>
<dbReference type="CCDS" id="CCDS26684.1"/>
<dbReference type="RefSeq" id="NP_035712.1">
    <property type="nucleotide sequence ID" value="NM_011582.3"/>
</dbReference>
<dbReference type="SMR" id="Q9Z1T2"/>
<dbReference type="BioGRID" id="204178">
    <property type="interactions" value="1"/>
</dbReference>
<dbReference type="ComplexPortal" id="CPX-3025">
    <property type="entry name" value="Thrombospondin 4 complex"/>
</dbReference>
<dbReference type="FunCoup" id="Q9Z1T2">
    <property type="interactions" value="567"/>
</dbReference>
<dbReference type="IntAct" id="Q9Z1T2">
    <property type="interactions" value="1"/>
</dbReference>
<dbReference type="STRING" id="10090.ENSMUSP00000022213"/>
<dbReference type="GlyCosmos" id="Q9Z1T2">
    <property type="glycosylation" value="3 sites, No reported glycans"/>
</dbReference>
<dbReference type="GlyGen" id="Q9Z1T2">
    <property type="glycosylation" value="3 sites, 1 N-linked glycan (1 site)"/>
</dbReference>
<dbReference type="PhosphoSitePlus" id="Q9Z1T2"/>
<dbReference type="CPTAC" id="non-CPTAC-3954"/>
<dbReference type="jPOST" id="Q9Z1T2"/>
<dbReference type="PaxDb" id="10090-ENSMUSP00000022213"/>
<dbReference type="ProteomicsDB" id="297998"/>
<dbReference type="Antibodypedia" id="3891">
    <property type="antibodies" value="168 antibodies from 26 providers"/>
</dbReference>
<dbReference type="DNASU" id="21828"/>
<dbReference type="Ensembl" id="ENSMUST00000022213.8">
    <property type="protein sequence ID" value="ENSMUSP00000022213.8"/>
    <property type="gene ID" value="ENSMUSG00000021702.8"/>
</dbReference>
<dbReference type="GeneID" id="21828"/>
<dbReference type="KEGG" id="mmu:21828"/>
<dbReference type="UCSC" id="uc007rku.2">
    <property type="organism name" value="mouse"/>
</dbReference>
<dbReference type="AGR" id="MGI:1101779"/>
<dbReference type="CTD" id="7060"/>
<dbReference type="MGI" id="MGI:1101779">
    <property type="gene designation" value="Thbs4"/>
</dbReference>
<dbReference type="VEuPathDB" id="HostDB:ENSMUSG00000021702"/>
<dbReference type="eggNOG" id="ENOG502QRK8">
    <property type="taxonomic scope" value="Eukaryota"/>
</dbReference>
<dbReference type="GeneTree" id="ENSGT00940000155227"/>
<dbReference type="HOGENOM" id="CLU_009257_1_1_1"/>
<dbReference type="InParanoid" id="Q9Z1T2"/>
<dbReference type="OMA" id="ECQNGAC"/>
<dbReference type="OrthoDB" id="14563at2759"/>
<dbReference type="PhylomeDB" id="Q9Z1T2"/>
<dbReference type="TreeFam" id="TF324917"/>
<dbReference type="Reactome" id="R-MMU-186797">
    <property type="pathway name" value="Signaling by PDGF"/>
</dbReference>
<dbReference type="BioGRID-ORCS" id="21828">
    <property type="hits" value="8 hits in 79 CRISPR screens"/>
</dbReference>
<dbReference type="ChiTaRS" id="Thbs4">
    <property type="organism name" value="mouse"/>
</dbReference>
<dbReference type="PRO" id="PR:Q9Z1T2"/>
<dbReference type="Proteomes" id="UP000000589">
    <property type="component" value="Chromosome 13"/>
</dbReference>
<dbReference type="RNAct" id="Q9Z1T2">
    <property type="molecule type" value="protein"/>
</dbReference>
<dbReference type="Bgee" id="ENSMUSG00000021702">
    <property type="expression patterns" value="Expressed in tarsal region and 149 other cell types or tissues"/>
</dbReference>
<dbReference type="ExpressionAtlas" id="Q9Z1T2">
    <property type="expression patterns" value="baseline and differential"/>
</dbReference>
<dbReference type="GO" id="GO:0005604">
    <property type="term" value="C:basement membrane"/>
    <property type="evidence" value="ECO:0007669"/>
    <property type="project" value="Ensembl"/>
</dbReference>
<dbReference type="GO" id="GO:0062023">
    <property type="term" value="C:collagen-containing extracellular matrix"/>
    <property type="evidence" value="ECO:0000314"/>
    <property type="project" value="UniProtKB"/>
</dbReference>
<dbReference type="GO" id="GO:0005783">
    <property type="term" value="C:endoplasmic reticulum"/>
    <property type="evidence" value="ECO:0000314"/>
    <property type="project" value="UniProtKB"/>
</dbReference>
<dbReference type="GO" id="GO:0005615">
    <property type="term" value="C:extracellular space"/>
    <property type="evidence" value="ECO:0000314"/>
    <property type="project" value="UniProtKB"/>
</dbReference>
<dbReference type="GO" id="GO:0016529">
    <property type="term" value="C:sarcoplasmic reticulum"/>
    <property type="evidence" value="ECO:0000314"/>
    <property type="project" value="UniProtKB"/>
</dbReference>
<dbReference type="GO" id="GO:0005509">
    <property type="term" value="F:calcium ion binding"/>
    <property type="evidence" value="ECO:0007669"/>
    <property type="project" value="Ensembl"/>
</dbReference>
<dbReference type="GO" id="GO:0008083">
    <property type="term" value="F:growth factor activity"/>
    <property type="evidence" value="ECO:0007669"/>
    <property type="project" value="UniProtKB-KW"/>
</dbReference>
<dbReference type="GO" id="GO:0008201">
    <property type="term" value="F:heparin binding"/>
    <property type="evidence" value="ECO:0007669"/>
    <property type="project" value="Ensembl"/>
</dbReference>
<dbReference type="GO" id="GO:0005178">
    <property type="term" value="F:integrin binding"/>
    <property type="evidence" value="ECO:0007669"/>
    <property type="project" value="Ensembl"/>
</dbReference>
<dbReference type="GO" id="GO:0048266">
    <property type="term" value="P:behavioral response to pain"/>
    <property type="evidence" value="ECO:0000315"/>
    <property type="project" value="UniProtKB"/>
</dbReference>
<dbReference type="GO" id="GO:0071603">
    <property type="term" value="P:endothelial cell-cell adhesion"/>
    <property type="evidence" value="ECO:0007669"/>
    <property type="project" value="Ensembl"/>
</dbReference>
<dbReference type="GO" id="GO:0051451">
    <property type="term" value="P:myoblast migration"/>
    <property type="evidence" value="ECO:0007669"/>
    <property type="project" value="Ensembl"/>
</dbReference>
<dbReference type="GO" id="GO:0016525">
    <property type="term" value="P:negative regulation of angiogenesis"/>
    <property type="evidence" value="ECO:0007669"/>
    <property type="project" value="Ensembl"/>
</dbReference>
<dbReference type="GO" id="GO:0051781">
    <property type="term" value="P:positive regulation of cell division"/>
    <property type="evidence" value="ECO:0007669"/>
    <property type="project" value="UniProtKB-KW"/>
</dbReference>
<dbReference type="GO" id="GO:0001938">
    <property type="term" value="P:positive regulation of endothelial cell proliferation"/>
    <property type="evidence" value="ECO:0007669"/>
    <property type="project" value="Ensembl"/>
</dbReference>
<dbReference type="GO" id="GO:0090023">
    <property type="term" value="P:positive regulation of neutrophil chemotaxis"/>
    <property type="evidence" value="ECO:0007669"/>
    <property type="project" value="Ensembl"/>
</dbReference>
<dbReference type="GO" id="GO:0034103">
    <property type="term" value="P:regulation of tissue remodeling"/>
    <property type="evidence" value="ECO:0000315"/>
    <property type="project" value="UniProtKB"/>
</dbReference>
<dbReference type="GO" id="GO:0034976">
    <property type="term" value="P:response to endoplasmic reticulum stress"/>
    <property type="evidence" value="ECO:0000315"/>
    <property type="project" value="UniProtKB"/>
</dbReference>
<dbReference type="GO" id="GO:0006986">
    <property type="term" value="P:response to unfolded protein"/>
    <property type="evidence" value="ECO:0007669"/>
    <property type="project" value="UniProtKB-KW"/>
</dbReference>
<dbReference type="GO" id="GO:0048771">
    <property type="term" value="P:tissue remodeling"/>
    <property type="evidence" value="ECO:0007669"/>
    <property type="project" value="UniProtKB-KW"/>
</dbReference>
<dbReference type="CDD" id="cd00054">
    <property type="entry name" value="EGF_CA"/>
    <property type="match status" value="3"/>
</dbReference>
<dbReference type="CDD" id="cd16080">
    <property type="entry name" value="TSP-4cc"/>
    <property type="match status" value="1"/>
</dbReference>
<dbReference type="FunFam" id="4.10.1080.10:FF:000004">
    <property type="entry name" value="Cartilage oligomeric matrix protein"/>
    <property type="match status" value="1"/>
</dbReference>
<dbReference type="FunFam" id="2.10.25.10:FF:000025">
    <property type="entry name" value="Thrombospondin 3"/>
    <property type="match status" value="1"/>
</dbReference>
<dbReference type="FunFam" id="2.10.25.10:FF:000027">
    <property type="entry name" value="Thrombospondin 3"/>
    <property type="match status" value="1"/>
</dbReference>
<dbReference type="FunFam" id="2.60.120.200:FF:000002">
    <property type="entry name" value="Thrombospondin 3"/>
    <property type="match status" value="1"/>
</dbReference>
<dbReference type="FunFam" id="4.10.1080.10:FF:000001">
    <property type="entry name" value="Thrombospondin 3"/>
    <property type="match status" value="1"/>
</dbReference>
<dbReference type="FunFam" id="2.10.25.10:FF:000262">
    <property type="entry name" value="Thrombospondin 4"/>
    <property type="match status" value="1"/>
</dbReference>
<dbReference type="FunFam" id="2.10.25.10:FF:000277">
    <property type="entry name" value="Thrombospondin 4"/>
    <property type="match status" value="1"/>
</dbReference>
<dbReference type="FunFam" id="2.60.120.200:FF:000123">
    <property type="entry name" value="Thrombospondin 4"/>
    <property type="match status" value="1"/>
</dbReference>
<dbReference type="FunFam" id="1.20.5.10:FF:000001">
    <property type="entry name" value="thrombospondin-3 isoform X2"/>
    <property type="match status" value="1"/>
</dbReference>
<dbReference type="Gene3D" id="1.20.5.10">
    <property type="match status" value="1"/>
</dbReference>
<dbReference type="Gene3D" id="2.60.120.200">
    <property type="match status" value="2"/>
</dbReference>
<dbReference type="Gene3D" id="2.10.25.10">
    <property type="entry name" value="Laminin"/>
    <property type="match status" value="4"/>
</dbReference>
<dbReference type="Gene3D" id="4.10.1080.10">
    <property type="entry name" value="TSP type-3 repeat"/>
    <property type="match status" value="2"/>
</dbReference>
<dbReference type="InterPro" id="IPR013320">
    <property type="entry name" value="ConA-like_dom_sf"/>
</dbReference>
<dbReference type="InterPro" id="IPR001881">
    <property type="entry name" value="EGF-like_Ca-bd_dom"/>
</dbReference>
<dbReference type="InterPro" id="IPR000742">
    <property type="entry name" value="EGF-like_dom"/>
</dbReference>
<dbReference type="InterPro" id="IPR018097">
    <property type="entry name" value="EGF_Ca-bd_CS"/>
</dbReference>
<dbReference type="InterPro" id="IPR003367">
    <property type="entry name" value="Thrombospondin_3-like_rpt"/>
</dbReference>
<dbReference type="InterPro" id="IPR017897">
    <property type="entry name" value="Thrombospondin_3_rpt"/>
</dbReference>
<dbReference type="InterPro" id="IPR008859">
    <property type="entry name" value="Thrombospondin_C"/>
</dbReference>
<dbReference type="InterPro" id="IPR024665">
    <property type="entry name" value="TSP/COMP_coiled-coil"/>
</dbReference>
<dbReference type="InterPro" id="IPR046970">
    <property type="entry name" value="TSP/COMP_coiled-coil_sf"/>
</dbReference>
<dbReference type="InterPro" id="IPR028974">
    <property type="entry name" value="TSP_type-3_rpt"/>
</dbReference>
<dbReference type="InterPro" id="IPR048287">
    <property type="entry name" value="TSPN-like_N"/>
</dbReference>
<dbReference type="PANTHER" id="PTHR10199">
    <property type="entry name" value="THROMBOSPONDIN"/>
    <property type="match status" value="1"/>
</dbReference>
<dbReference type="PANTHER" id="PTHR10199:SF92">
    <property type="entry name" value="THROMBOSPONDIN-4"/>
    <property type="match status" value="1"/>
</dbReference>
<dbReference type="Pfam" id="PF11598">
    <property type="entry name" value="COMP"/>
    <property type="match status" value="1"/>
</dbReference>
<dbReference type="Pfam" id="PF00008">
    <property type="entry name" value="EGF"/>
    <property type="match status" value="1"/>
</dbReference>
<dbReference type="Pfam" id="PF02412">
    <property type="entry name" value="TSP_3"/>
    <property type="match status" value="5"/>
</dbReference>
<dbReference type="Pfam" id="PF05735">
    <property type="entry name" value="TSP_C"/>
    <property type="match status" value="1"/>
</dbReference>
<dbReference type="SMART" id="SM00181">
    <property type="entry name" value="EGF"/>
    <property type="match status" value="4"/>
</dbReference>
<dbReference type="SMART" id="SM00179">
    <property type="entry name" value="EGF_CA"/>
    <property type="match status" value="3"/>
</dbReference>
<dbReference type="SMART" id="SM00210">
    <property type="entry name" value="TSPN"/>
    <property type="match status" value="1"/>
</dbReference>
<dbReference type="SUPFAM" id="SSF58006">
    <property type="entry name" value="Assembly domain of cartilage oligomeric matrix protein"/>
    <property type="match status" value="1"/>
</dbReference>
<dbReference type="SUPFAM" id="SSF49899">
    <property type="entry name" value="Concanavalin A-like lectins/glucanases"/>
    <property type="match status" value="2"/>
</dbReference>
<dbReference type="SUPFAM" id="SSF57196">
    <property type="entry name" value="EGF/Laminin"/>
    <property type="match status" value="2"/>
</dbReference>
<dbReference type="SUPFAM" id="SSF103647">
    <property type="entry name" value="TSP type-3 repeat"/>
    <property type="match status" value="3"/>
</dbReference>
<dbReference type="PROSITE" id="PS01186">
    <property type="entry name" value="EGF_2"/>
    <property type="match status" value="1"/>
</dbReference>
<dbReference type="PROSITE" id="PS50026">
    <property type="entry name" value="EGF_3"/>
    <property type="match status" value="4"/>
</dbReference>
<dbReference type="PROSITE" id="PS01187">
    <property type="entry name" value="EGF_CA"/>
    <property type="match status" value="2"/>
</dbReference>
<dbReference type="PROSITE" id="PS51234">
    <property type="entry name" value="TSP3"/>
    <property type="match status" value="8"/>
</dbReference>
<dbReference type="PROSITE" id="PS51236">
    <property type="entry name" value="TSP_CTER"/>
    <property type="match status" value="1"/>
</dbReference>
<sequence>MPAPRAAAAAFLLLHLVLQPWQRTSAQATPQVFDLLPSSSQRLNPSALQPVLTDPTLHEVYLISTFKLQSKSSATIFGLYSSSDNSKYFEFTVMGRLNKAILRYLKNDGKIHLVVFNNLQLADGRRHRVLLRLSNLQRGDGSVELYLDCAQADSVRNLPRAFSGLTQNPESIELRTFQRKPQDFLEELKLVVRGSLFQVASLQDCFLQQSEPLAATSTGDFNRQFLGQMTQLNQLLGEVKDLLRQQVKETSFLRNTIAECQACGPLSFQSPTPNTLVPIAPPAPPTRPTRHCDSSPCFRGVRCTDTRDGFQCGPCPDGYTGNGITCSDVDECKYHPCYPGVRCVNLAPGFRCDACPVGFTGPMVQGVGINFAKTNKQVCTDVDECQNGACVLNSICINTLGSYRCGPCKPGYTGDQTRGCKTERSCRNPEQNPCSVHAQCIEERQGDVTCVCGVGWAGDGYVCGKDVDIDSYPDEELPCSARNCKKDNCKYVPNSGQEDADRDGIGDACDEDADGDGILNEQDNCVLTHNIDQRNSDKDIFGDACDNCRMVLNNDQKDTDGDGRGDACDDDMDGDGIKNILDNCPRVPNRDQQDRDGDDVGDACDSCPDVSNPNQSDVDNDLVGDSCDTNQDSDGDGHQDSTDNCPTVINSSQLDTDKDGIGDECDDDDDNDGIPDLVPPGPDNCRLVPNPAQEDSNNDGVGDICEADFDQDQVIDHIDVCPENAEITLTDFRAYQTVVLDPEGDAQIDPNWVVLNQGMEIVQTMNSDPGLAVGYTAFNGVDFEGTFHVNTQTDDDYAGFIFGYQDSSSFYVVMWKQTEQTYWQATPFRAVAEPGIQLKAVKSKTGPGEHLRNSLWHTGDTSDQVRLLWKDSRNVGWKDKVSYRWFLQHRPQVGYIRVRFYEGSELVADSGVTIDTTMRGGRLGVFCFSQENIIWSNLKYRCNDTIPEDFQEFQTQSFDRLDN</sequence>
<gene>
    <name type="primary">Thbs4</name>
    <name type="synonym">Tsp4</name>
</gene>
<name>TSP4_MOUSE</name>
<comment type="function">
    <text evidence="6 7 8 9 10 11">Adhesive glycoprotein that mediates cell-to-cell and cell-to-matrix interactions and is involved in various processes including cellular proliferation, migration, adhesion and attachment, inflammatory response to CNS injury, regulation of vascular inflammation and adaptive responses of the heart to pressure overload and in myocardial function and remodeling. Binds to structural extracellular matrix (ECM) proteins and modulates the ECM in response to tissue damage, contributing to cardioprotective and adaptive ECM remodeling. Plays a role in ER stress response, via its interaction with the activating transcription factor 6 alpha (ATF6) which produces adaptive ER stress response factors and protects myocardium from pressure overload. May contribute to spinal presynaptic hypersensitivity and neuropathic pain states after peripheral nerve injury. May play a role in regulating protective astrogenesis from the subventricular zone (SVZ) niche after injury in a NOTCH1-dependent manner.</text>
</comment>
<comment type="subunit">
    <text evidence="1 9 11">Homopentamer; disulfide-linked. Interacts with PTBP3 (By similarity). Interacts (via EGF-like 3; calcium-binding domain) with ATF6 and facilitates its processing, activation and nuclear translocation. Interacts with NOTCH1.</text>
</comment>
<comment type="interaction">
    <interactant intactId="EBI-6171531">
        <id>Q9Z1T2</id>
    </interactant>
    <interactant intactId="EBI-6171558">
        <id>F6VAN0</id>
        <label>Atf6</label>
    </interactant>
    <organismsDiffer>false</organismsDiffer>
    <experiments>3</experiments>
</comment>
<comment type="subcellular location">
    <subcellularLocation>
        <location evidence="9">Endoplasmic reticulum</location>
    </subcellularLocation>
    <subcellularLocation>
        <location evidence="9">Sarcoplasmic reticulum</location>
    </subcellularLocation>
    <subcellularLocation>
        <location evidence="9">Secreted</location>
    </subcellularLocation>
    <subcellularLocation>
        <location evidence="9">Secreted</location>
        <location evidence="9">Extracellular space</location>
    </subcellularLocation>
    <subcellularLocation>
        <location evidence="8 9">Secreted</location>
        <location evidence="8 9">Extracellular space</location>
        <location evidence="8 9">Extracellular matrix</location>
    </subcellularLocation>
</comment>
<comment type="tissue specificity">
    <text evidence="8 10 11">Heart. Up-regulated in the heart in response to ischemic injury and pathology (at protein level). Astrocytes; expressed at high levels in subventricular zone (SVZ)-derived astrocytes and at low levels in cortical astrocytes. In response to peripheral nerve injury, significantly up-regulated in the dorsal spinal cord (at protein level).</text>
</comment>
<comment type="disruption phenotype">
    <text evidence="7 8 10 11">On exposure to acute pressure overload, mice exhibit a marked increase in: heart weight and fibrosis, cardiomyocyte size and number of apoptotic cells in the myocardium, deposition of extracellular matrix (ECM) and levels of interstitial collagens. The increased ECM deposition is accompanied by changes in functional parameters of the heart and decreased vessel density. Mice also show defective induction of the ER stress response in the heart. Do not exhibit peripheral nerve injury-induced behavioral hypersensitivities such as thermal/mechanical hyperalgesia and tactile allodynia but show severe defects in cortical-injury-induced subventricular zone astrogenesis.</text>
</comment>
<comment type="similarity">
    <text evidence="12">Belongs to the thrombospondin family.</text>
</comment>
<evidence type="ECO:0000250" key="1"/>
<evidence type="ECO:0000255" key="2"/>
<evidence type="ECO:0000255" key="3">
    <source>
        <dbReference type="PROSITE-ProRule" id="PRU00076"/>
    </source>
</evidence>
<evidence type="ECO:0000255" key="4">
    <source>
        <dbReference type="PROSITE-ProRule" id="PRU00635"/>
    </source>
</evidence>
<evidence type="ECO:0000256" key="5">
    <source>
        <dbReference type="SAM" id="MobiDB-lite"/>
    </source>
</evidence>
<evidence type="ECO:0000269" key="6">
    <source>
    </source>
</evidence>
<evidence type="ECO:0000269" key="7">
    <source>
    </source>
</evidence>
<evidence type="ECO:0000269" key="8">
    <source>
    </source>
</evidence>
<evidence type="ECO:0000269" key="9">
    <source>
    </source>
</evidence>
<evidence type="ECO:0000269" key="10">
    <source>
    </source>
</evidence>
<evidence type="ECO:0000269" key="11">
    <source>
    </source>
</evidence>
<evidence type="ECO:0000305" key="12"/>
<reference key="1">
    <citation type="journal article" date="1999" name="Mamm. Genome">
        <title>The thrombospondin-4 gene.</title>
        <authorList>
            <person name="Newton G."/>
            <person name="Weremowicz S."/>
            <person name="Morton C.C."/>
            <person name="Jenkins N.A."/>
            <person name="Gilbert D.J."/>
            <person name="Copeland N.G."/>
            <person name="Lawler J."/>
        </authorList>
    </citation>
    <scope>NUCLEOTIDE SEQUENCE [GENOMIC DNA / MRNA]</scope>
</reference>
<reference key="2">
    <citation type="journal article" date="2010" name="Cell">
        <title>A tissue-specific atlas of mouse protein phosphorylation and expression.</title>
        <authorList>
            <person name="Huttlin E.L."/>
            <person name="Jedrychowski M.P."/>
            <person name="Elias J.E."/>
            <person name="Goswami T."/>
            <person name="Rad R."/>
            <person name="Beausoleil S.A."/>
            <person name="Villen J."/>
            <person name="Haas W."/>
            <person name="Sowa M.E."/>
            <person name="Gygi S.P."/>
        </authorList>
    </citation>
    <scope>IDENTIFICATION BY MASS SPECTROMETRY [LARGE SCALE ANALYSIS]</scope>
    <source>
        <tissue>Brain</tissue>
        <tissue>Kidney</tissue>
    </source>
</reference>
<reference key="3">
    <citation type="journal article" date="2010" name="Circ. Res.">
        <title>Thrombospondin-4 regulates vascular inflammation and atherogenesis.</title>
        <authorList>
            <person name="Frolova E.G."/>
            <person name="Pluskota E."/>
            <person name="Krukovets I."/>
            <person name="Burke T."/>
            <person name="Drumm C."/>
            <person name="Smith J.D."/>
            <person name="Blech L."/>
            <person name="Febbraio M."/>
            <person name="Bornstein P."/>
            <person name="Plow E.F."/>
            <person name="Stenina O.I."/>
        </authorList>
    </citation>
    <scope>FUNCTION</scope>
</reference>
<reference key="4">
    <citation type="journal article" date="2011" name="Circ. Res.">
        <title>Thrombospondin-4 is required for stretch-mediated contractility augmentation in cardiac muscle.</title>
        <authorList>
            <person name="Cingolani O.H."/>
            <person name="Kirk J.A."/>
            <person name="Seo K."/>
            <person name="Koitabashi N."/>
            <person name="Lee D.I."/>
            <person name="Ramirez-Correa G."/>
            <person name="Bedja D."/>
            <person name="Barth A.S."/>
            <person name="Moens A.L."/>
            <person name="Kass D.A."/>
        </authorList>
    </citation>
    <scope>FUNCTION</scope>
    <scope>DISRUPTION PHENOTYPE</scope>
</reference>
<reference key="5">
    <citation type="journal article" date="2012" name="Cell">
        <title>A thrombospondin-dependent pathway for a protective ER stress response.</title>
        <authorList>
            <person name="Lynch J.M."/>
            <person name="Maillet M."/>
            <person name="Vanhoutte D."/>
            <person name="Schloemer A."/>
            <person name="Sargent M.A."/>
            <person name="Blair N.S."/>
            <person name="Lynch K.A."/>
            <person name="Okada T."/>
            <person name="Aronow B.J."/>
            <person name="Osinska H."/>
            <person name="Prywes R."/>
            <person name="Lorenz J.N."/>
            <person name="Mori K."/>
            <person name="Lawler J."/>
            <person name="Robbins J."/>
            <person name="Molkentin J.D."/>
        </authorList>
    </citation>
    <scope>FUNCTION</scope>
    <scope>SUBCELLULAR LOCATION</scope>
    <scope>INTERACTION WITH ATF6</scope>
    <scope>TISSUE SPECIFICITY</scope>
</reference>
<reference key="6">
    <citation type="journal article" date="2012" name="FASEB J.">
        <title>Thrombospondin-4 regulates fibrosis and remodeling of the myocardium in response to pressure overload.</title>
        <authorList>
            <person name="Frolova E.G."/>
            <person name="Sopko N."/>
            <person name="Blech L."/>
            <person name="Popovic Z.B."/>
            <person name="Li J."/>
            <person name="Vasanji A."/>
            <person name="Drumm C."/>
            <person name="Krukovets I."/>
            <person name="Jain M.K."/>
            <person name="Penn M.S."/>
            <person name="Plow E.F."/>
            <person name="Stenina O.I."/>
        </authorList>
    </citation>
    <scope>FUNCTION</scope>
    <scope>SUBCELLULAR LOCATION</scope>
    <scope>TISSUE SPECIFICITY</scope>
    <scope>DISRUPTION PHENOTYPE</scope>
</reference>
<reference key="7">
    <citation type="journal article" date="2012" name="J. Neurosci.">
        <title>Thrombospondin-4 contributes to spinal sensitization and neuropathic pain states.</title>
        <authorList>
            <person name="Kim D.S."/>
            <person name="Li K.W."/>
            <person name="Boroujerdi A."/>
            <person name="Peter Yu Y."/>
            <person name="Zhou C.Y."/>
            <person name="Deng P."/>
            <person name="Park J."/>
            <person name="Zhang X."/>
            <person name="Lee J."/>
            <person name="Corpe M."/>
            <person name="Sharp K."/>
            <person name="Steward O."/>
            <person name="Eroglu C."/>
            <person name="Barres B."/>
            <person name="Zaucke F."/>
            <person name="Xu Z.C."/>
            <person name="Luo Z.D."/>
        </authorList>
    </citation>
    <scope>FUNCTION</scope>
    <scope>TISSUE SPECIFICITY</scope>
    <scope>DISRUPTION PHENOTYPE</scope>
</reference>
<reference key="8">
    <citation type="journal article" date="2013" name="Nature">
        <title>Protective astrogenesis from the SVZ niche after injury is controlled by Notch modulator Thbs4.</title>
        <authorList>
            <person name="Benner E.J."/>
            <person name="Luciano D."/>
            <person name="Jo R."/>
            <person name="Abdi K."/>
            <person name="Paez-Gonzalez P."/>
            <person name="Sheng H."/>
            <person name="Warner D.S."/>
            <person name="Liu C."/>
            <person name="Eroglu C."/>
            <person name="Kuo C.T."/>
        </authorList>
    </citation>
    <scope>FUNCTION</scope>
    <scope>TISSUE SPECIFICITY</scope>
    <scope>DISRUPTION PHENOTYPE</scope>
    <scope>INTERACTION WITH NOTCH1</scope>
</reference>
<accession>Q9Z1T2</accession>
<accession>Q9QYS3</accession>
<accession>Q9WUE0</accession>
<proteinExistence type="evidence at protein level"/>